<sequence>MAVDEMQLAASMQMSNQMSNSQRMSFAIHEILGIQGNAYLSHGYCPQGTFLSNQPNFMDIGSCGVSGFDRQLCGTDSIGNAPAPLMYRMPISTSEVITSEPQTHVSSSSILSSATTSNSSGGGSSGGGGKASKRKKRRHRTIFTQYQIDELEKAFQDSHYPDIYAREVLAGKTELQEDRIQVWFQNRRAKWRKTEKTWGKSTIMAEYGLYGAMVRHSLPLPETITKSAEAADPQQSAAPWLLGMHKKSMEAAAHLESVEKCDMSDSDDDDRPVTPPVQRQVKNEYKPRIIEHVQQQAPQHQSSLNFDTSLVVSSSLSQLHFQDSQMIPNNNASLKLYHDYNNPM</sequence>
<proteinExistence type="evidence at protein level"/>
<keyword id="KW-0217">Developmental protein</keyword>
<keyword id="KW-0238">DNA-binding</keyword>
<keyword id="KW-0371">Homeobox</keyword>
<keyword id="KW-0524">Neurogenesis</keyword>
<keyword id="KW-0539">Nucleus</keyword>
<keyword id="KW-1185">Reference proteome</keyword>
<keyword id="KW-0804">Transcription</keyword>
<keyword id="KW-0805">Transcription regulation</keyword>
<feature type="chain" id="PRO_0000048986" description="Homeobox protein ceh-10">
    <location>
        <begin position="1"/>
        <end position="344"/>
    </location>
</feature>
<feature type="domain" description="CVC" evidence="3">
    <location>
        <begin position="196"/>
        <end position="250"/>
    </location>
</feature>
<feature type="DNA-binding region" description="Homeobox" evidence="2">
    <location>
        <begin position="136"/>
        <end position="195"/>
    </location>
</feature>
<feature type="region of interest" description="Disordered" evidence="4">
    <location>
        <begin position="97"/>
        <end position="139"/>
    </location>
</feature>
<feature type="region of interest" description="Disordered" evidence="4">
    <location>
        <begin position="260"/>
        <end position="279"/>
    </location>
</feature>
<feature type="compositionally biased region" description="Low complexity" evidence="4">
    <location>
        <begin position="106"/>
        <end position="119"/>
    </location>
</feature>
<feature type="compositionally biased region" description="Gly residues" evidence="4">
    <location>
        <begin position="120"/>
        <end position="130"/>
    </location>
</feature>
<feature type="mutagenesis site" description="In gm133; at early larval stage L1, the majority of animals appear to lack both ALA and RID neurons, while others show a single neuron." evidence="7">
    <location>
        <begin position="145"/>
        <end position="344"/>
    </location>
</feature>
<feature type="mutagenesis site" description="In gm58; larval lethality. Abolishes expression of ttx-3 in AIY neurons late in embryogenesis at the 3-fold stage and in larvae, but not in earlier embryo." evidence="5 6 11">
    <original>A</original>
    <variation>T</variation>
    <location>
        <position position="205"/>
    </location>
</feature>
<name>HM10_CAEEL</name>
<accession>P41935</accession>
<reference key="1">
    <citation type="journal article" date="1995" name="Development">
        <title>The C. elegans neuronally expressed homeobox gene ceh-10 is closely related to genes expressed in the vertebrate eye.</title>
        <authorList>
            <person name="Svendsen P.C."/>
            <person name="McGhee J.D."/>
        </authorList>
    </citation>
    <scope>NUCLEOTIDE SEQUENCE [GENOMIC DNA]</scope>
    <scope>TISSUE SPECIFICITY</scope>
    <source>
        <strain>Bristol N2</strain>
    </source>
</reference>
<reference key="2">
    <citation type="journal article" date="1998" name="Science">
        <title>Genome sequence of the nematode C. elegans: a platform for investigating biology.</title>
        <authorList>
            <consortium name="The C. elegans sequencing consortium"/>
        </authorList>
    </citation>
    <scope>NUCLEOTIDE SEQUENCE [LARGE SCALE GENOMIC DNA]</scope>
    <source>
        <strain>Bristol N2</strain>
    </source>
</reference>
<reference key="3">
    <citation type="journal article" date="1990" name="Nucleic Acids Res.">
        <title>Homeobox containing genes in the nematode Caenorhabditis elegans.</title>
        <authorList>
            <person name="Hawkins N.C."/>
            <person name="McGhee J.D."/>
        </authorList>
    </citation>
    <scope>NUCLEOTIDE SEQUENCE [GENOMIC DNA] OF 130-201</scope>
</reference>
<reference key="4">
    <citation type="journal article" date="1990" name="Dev. Genet.">
        <title>Mutations affecting embryonic cell migrations in Caenorhabditis elegans.</title>
        <authorList>
            <person name="Manser J."/>
            <person name="Wood W.B."/>
        </authorList>
    </citation>
    <scope>FUNCTION</scope>
</reference>
<reference key="5">
    <citation type="journal article" date="1998" name="Genetics">
        <title>Identification of Caenorhabditis elegans genes required for neuronal differentiation and migration.</title>
        <authorList>
            <person name="Forrester W.C."/>
            <person name="Perens E."/>
            <person name="Zallen J.A."/>
            <person name="Garriga G."/>
        </authorList>
    </citation>
    <scope>FUNCTION</scope>
    <scope>TISSUE SPECIFICITY</scope>
    <scope>MUTAGENESIS OF ALA-205</scope>
</reference>
<reference key="6">
    <citation type="journal article" date="2001" name="Development">
        <title>A regulatory cascade of three homeobox genes, ceh-10, ttx-3 and ceh-23, controls cell fate specification of a defined interneuron class in C. elegans.</title>
        <authorList>
            <person name="Altun-Gultekin Z."/>
            <person name="Andachi Y."/>
            <person name="Tsalik E.L."/>
            <person name="Pilgrim D."/>
            <person name="Kohara Y."/>
            <person name="Hobert O."/>
        </authorList>
    </citation>
    <scope>FUNCTION</scope>
    <scope>MUTAGENESIS OF ALA-205</scope>
</reference>
<reference key="7">
    <citation type="journal article" date="2004" name="Dev. Cell">
        <title>Genomic cis-regulatory architecture and trans-acting regulators of a single interneuron-specific gene battery in C. elegans.</title>
        <authorList>
            <person name="Wenick A.S."/>
            <person name="Hobert O."/>
        </authorList>
    </citation>
    <scope>FUNCTION</scope>
</reference>
<reference key="8">
    <citation type="journal article" date="2009" name="Dev. Cell">
        <title>Linking asymmetric cell division to the terminal differentiation program of postmitotic neurons in C. elegans.</title>
        <authorList>
            <person name="Bertrand V."/>
            <person name="Hobert O."/>
        </authorList>
    </citation>
    <scope>FUNCTION</scope>
    <scope>DEVELOPMENTAL STAGE</scope>
    <scope>MUTAGENESIS OF ALA-205</scope>
</reference>
<reference key="9">
    <citation type="journal article" date="2010" name="Development">
        <title>Paired and LIM class homeodomain proteins coordinate differentiation of the C. elegans ALA neuron.</title>
        <authorList>
            <person name="Van Buskirk C."/>
            <person name="Sternberg P.W."/>
        </authorList>
    </citation>
    <scope>FUNCTION</scope>
    <scope>DISRUPTION PHENOTYPE</scope>
    <scope>MUTAGENESIS OF 145-GLN--MET-344</scope>
</reference>
<reference key="10">
    <citation type="journal article" date="2010" name="Mech. Ageing Dev.">
        <title>Regulation of longevity by genes required for the functions of AIY interneuron in nematode Caenorhabditis elegans.</title>
        <authorList>
            <person name="Shen L."/>
            <person name="Hu Y."/>
            <person name="Cai T."/>
            <person name="Lin X."/>
            <person name="Wang D."/>
        </authorList>
    </citation>
    <scope>FUNCTION</scope>
</reference>
<evidence type="ECO:0000250" key="1">
    <source>
        <dbReference type="UniProtKB" id="P58304"/>
    </source>
</evidence>
<evidence type="ECO:0000255" key="2">
    <source>
        <dbReference type="PROSITE-ProRule" id="PRU00108"/>
    </source>
</evidence>
<evidence type="ECO:0000255" key="3">
    <source>
        <dbReference type="PROSITE-ProRule" id="PRU00829"/>
    </source>
</evidence>
<evidence type="ECO:0000256" key="4">
    <source>
        <dbReference type="SAM" id="MobiDB-lite"/>
    </source>
</evidence>
<evidence type="ECO:0000269" key="5">
    <source>
    </source>
</evidence>
<evidence type="ECO:0000269" key="6">
    <source>
    </source>
</evidence>
<evidence type="ECO:0000269" key="7">
    <source>
    </source>
</evidence>
<evidence type="ECO:0000269" key="8">
    <source>
    </source>
</evidence>
<evidence type="ECO:0000269" key="9">
    <source>
    </source>
</evidence>
<evidence type="ECO:0000269" key="10">
    <source>
    </source>
</evidence>
<evidence type="ECO:0000269" key="11">
    <source>
    </source>
</evidence>
<evidence type="ECO:0000305" key="12"/>
<evidence type="ECO:0000312" key="13">
    <source>
        <dbReference type="WormBase" id="W03A3.1"/>
    </source>
</evidence>
<dbReference type="EMBL" id="U19995">
    <property type="protein sequence ID" value="AAA93063.1"/>
    <property type="molecule type" value="Genomic_DNA"/>
</dbReference>
<dbReference type="EMBL" id="BX284603">
    <property type="protein sequence ID" value="CCD73324.1"/>
    <property type="molecule type" value="Genomic_DNA"/>
</dbReference>
<dbReference type="EMBL" id="X52812">
    <property type="protein sequence ID" value="CAB57216.1"/>
    <property type="molecule type" value="Genomic_DNA"/>
</dbReference>
<dbReference type="PIR" id="S13130">
    <property type="entry name" value="S13130"/>
</dbReference>
<dbReference type="PIR" id="T34470">
    <property type="entry name" value="T34470"/>
</dbReference>
<dbReference type="PIR" id="T37297">
    <property type="entry name" value="T37297"/>
</dbReference>
<dbReference type="RefSeq" id="NP_498251.1">
    <property type="nucleotide sequence ID" value="NM_065850.3"/>
</dbReference>
<dbReference type="SMR" id="P41935"/>
<dbReference type="BioGRID" id="41036">
    <property type="interactions" value="1"/>
</dbReference>
<dbReference type="FunCoup" id="P41935">
    <property type="interactions" value="143"/>
</dbReference>
<dbReference type="IntAct" id="P41935">
    <property type="interactions" value="1"/>
</dbReference>
<dbReference type="STRING" id="6239.W03A3.1.1"/>
<dbReference type="PaxDb" id="6239-W03A3.1"/>
<dbReference type="EnsemblMetazoa" id="W03A3.1.1">
    <property type="protein sequence ID" value="W03A3.1.1"/>
    <property type="gene ID" value="WBGene00000435"/>
</dbReference>
<dbReference type="GeneID" id="175811"/>
<dbReference type="KEGG" id="cel:CELE_W03A3.1"/>
<dbReference type="UCSC" id="W03A3.1">
    <property type="organism name" value="c. elegans"/>
</dbReference>
<dbReference type="AGR" id="WB:WBGene00000435"/>
<dbReference type="CTD" id="175811"/>
<dbReference type="WormBase" id="W03A3.1">
    <property type="protein sequence ID" value="CE07563"/>
    <property type="gene ID" value="WBGene00000435"/>
    <property type="gene designation" value="ceh-10"/>
</dbReference>
<dbReference type="eggNOG" id="KOG0494">
    <property type="taxonomic scope" value="Eukaryota"/>
</dbReference>
<dbReference type="GeneTree" id="ENSGT00940000168254"/>
<dbReference type="HOGENOM" id="CLU_853172_0_0_1"/>
<dbReference type="InParanoid" id="P41935"/>
<dbReference type="OMA" id="SHGYCPQ"/>
<dbReference type="OrthoDB" id="6159439at2759"/>
<dbReference type="SignaLink" id="P41935"/>
<dbReference type="PRO" id="PR:P41935"/>
<dbReference type="Proteomes" id="UP000001940">
    <property type="component" value="Chromosome III"/>
</dbReference>
<dbReference type="Bgee" id="WBGene00000435">
    <property type="expression patterns" value="Expressed in embryo and 3 other cell types or tissues"/>
</dbReference>
<dbReference type="GO" id="GO:0005634">
    <property type="term" value="C:nucleus"/>
    <property type="evidence" value="ECO:0000314"/>
    <property type="project" value="WormBase"/>
</dbReference>
<dbReference type="GO" id="GO:0001228">
    <property type="term" value="F:DNA-binding transcription activator activity, RNA polymerase II-specific"/>
    <property type="evidence" value="ECO:0000315"/>
    <property type="project" value="UniProtKB"/>
</dbReference>
<dbReference type="GO" id="GO:0003700">
    <property type="term" value="F:DNA-binding transcription factor activity"/>
    <property type="evidence" value="ECO:0000304"/>
    <property type="project" value="WormBase"/>
</dbReference>
<dbReference type="GO" id="GO:0000981">
    <property type="term" value="F:DNA-binding transcription factor activity, RNA polymerase II-specific"/>
    <property type="evidence" value="ECO:0000318"/>
    <property type="project" value="GO_Central"/>
</dbReference>
<dbReference type="GO" id="GO:0000978">
    <property type="term" value="F:RNA polymerase II cis-regulatory region sequence-specific DNA binding"/>
    <property type="evidence" value="ECO:0000314"/>
    <property type="project" value="UniProtKB"/>
</dbReference>
<dbReference type="GO" id="GO:0000977">
    <property type="term" value="F:RNA polymerase II transcription regulatory region sequence-specific DNA binding"/>
    <property type="evidence" value="ECO:0000318"/>
    <property type="project" value="GO_Central"/>
</dbReference>
<dbReference type="GO" id="GO:0030154">
    <property type="term" value="P:cell differentiation"/>
    <property type="evidence" value="ECO:0000315"/>
    <property type="project" value="WormBase"/>
</dbReference>
<dbReference type="GO" id="GO:0018991">
    <property type="term" value="P:egg-laying behavior"/>
    <property type="evidence" value="ECO:0000315"/>
    <property type="project" value="WormBase"/>
</dbReference>
<dbReference type="GO" id="GO:0040011">
    <property type="term" value="P:locomotion"/>
    <property type="evidence" value="ECO:0000315"/>
    <property type="project" value="WormBase"/>
</dbReference>
<dbReference type="GO" id="GO:0048666">
    <property type="term" value="P:neuron development"/>
    <property type="evidence" value="ECO:0000315"/>
    <property type="project" value="WormBase"/>
</dbReference>
<dbReference type="GO" id="GO:0030182">
    <property type="term" value="P:neuron differentiation"/>
    <property type="evidence" value="ECO:0000315"/>
    <property type="project" value="WormBase"/>
</dbReference>
<dbReference type="GO" id="GO:0001764">
    <property type="term" value="P:neuron migration"/>
    <property type="evidence" value="ECO:0000315"/>
    <property type="project" value="WormBase"/>
</dbReference>
<dbReference type="GO" id="GO:0045944">
    <property type="term" value="P:positive regulation of transcription by RNA polymerase II"/>
    <property type="evidence" value="ECO:0000315"/>
    <property type="project" value="UniProtKB"/>
</dbReference>
<dbReference type="GO" id="GO:0030334">
    <property type="term" value="P:regulation of cell migration"/>
    <property type="evidence" value="ECO:0000315"/>
    <property type="project" value="WormBase"/>
</dbReference>
<dbReference type="GO" id="GO:0006357">
    <property type="term" value="P:regulation of transcription by RNA polymerase II"/>
    <property type="evidence" value="ECO:0000318"/>
    <property type="project" value="GO_Central"/>
</dbReference>
<dbReference type="CDD" id="cd00086">
    <property type="entry name" value="homeodomain"/>
    <property type="match status" value="1"/>
</dbReference>
<dbReference type="FunFam" id="1.10.10.60:FF:000065">
    <property type="entry name" value="Visual system homeobox 1"/>
    <property type="match status" value="1"/>
</dbReference>
<dbReference type="Gene3D" id="1.10.10.60">
    <property type="entry name" value="Homeodomain-like"/>
    <property type="match status" value="1"/>
</dbReference>
<dbReference type="InterPro" id="IPR023339">
    <property type="entry name" value="CVC"/>
</dbReference>
<dbReference type="InterPro" id="IPR001356">
    <property type="entry name" value="HD"/>
</dbReference>
<dbReference type="InterPro" id="IPR017970">
    <property type="entry name" value="Homeobox_CS"/>
</dbReference>
<dbReference type="InterPro" id="IPR009057">
    <property type="entry name" value="Homeodomain-like_sf"/>
</dbReference>
<dbReference type="InterPro" id="IPR052294">
    <property type="entry name" value="VSX_homeobox_regulators"/>
</dbReference>
<dbReference type="PANTHER" id="PTHR46892">
    <property type="entry name" value="VISUAL SYSTEM HOMEOBOX 2"/>
    <property type="match status" value="1"/>
</dbReference>
<dbReference type="PANTHER" id="PTHR46892:SF3">
    <property type="entry name" value="VISUAL SYSTEM HOMEOBOX 2"/>
    <property type="match status" value="1"/>
</dbReference>
<dbReference type="Pfam" id="PF00046">
    <property type="entry name" value="Homeodomain"/>
    <property type="match status" value="1"/>
</dbReference>
<dbReference type="SMART" id="SM00389">
    <property type="entry name" value="HOX"/>
    <property type="match status" value="1"/>
</dbReference>
<dbReference type="SUPFAM" id="SSF46689">
    <property type="entry name" value="Homeodomain-like"/>
    <property type="match status" value="1"/>
</dbReference>
<dbReference type="PROSITE" id="PS51496">
    <property type="entry name" value="CVC"/>
    <property type="match status" value="1"/>
</dbReference>
<dbReference type="PROSITE" id="PS00027">
    <property type="entry name" value="HOMEOBOX_1"/>
    <property type="match status" value="1"/>
</dbReference>
<dbReference type="PROSITE" id="PS50071">
    <property type="entry name" value="HOMEOBOX_2"/>
    <property type="match status" value="1"/>
</dbReference>
<organism>
    <name type="scientific">Caenorhabditis elegans</name>
    <dbReference type="NCBI Taxonomy" id="6239"/>
    <lineage>
        <taxon>Eukaryota</taxon>
        <taxon>Metazoa</taxon>
        <taxon>Ecdysozoa</taxon>
        <taxon>Nematoda</taxon>
        <taxon>Chromadorea</taxon>
        <taxon>Rhabditida</taxon>
        <taxon>Rhabditina</taxon>
        <taxon>Rhabditomorpha</taxon>
        <taxon>Rhabditoidea</taxon>
        <taxon>Rhabditidae</taxon>
        <taxon>Peloderinae</taxon>
        <taxon>Caenorhabditis</taxon>
    </lineage>
</organism>
<gene>
    <name evidence="13" type="primary">ceh-10</name>
    <name evidence="13" type="ORF">W03A3.1</name>
</gene>
<comment type="function">
    <text evidence="1 5 7 8 9 11">Transcription factor (PubMed:15177025). Binds to a sequence motif, 5'-TTATTGGCTTCGTTAA-3', which may be involved in AIY interneuron function, in the regulatory elements of target genes; binding is more efficient, in vitro, together with LIM/homeobox protein ttx-3 (PubMed:15177025). Required for larval development and for cell fate specification and migration of CAN neurons (PubMed:11493519, PubMed:2361334, PubMed:9475729). Required for generation, or placement, and differentiation of the ALA neuron, and may play a role in ALA axon migration (PubMed:20501595). Involved in development and function of the AIY interneurons, acting by regulating expression of LIM/homeobox protein ttx-3 (PubMed:11493519, PubMed:15177025, PubMed:19386265). Also acts in an autoregulatory feedback loop to maintain its own expression (PubMed:19386265). Modulates lifespan, perhaps acting in the AIY interneurons (PubMed:21055415). Plays a role in fertility and egg-laying behavior (PubMed:21055415).</text>
</comment>
<comment type="subcellular location">
    <subcellularLocation>
        <location evidence="12">Nucleus</location>
    </subcellularLocation>
</comment>
<comment type="tissue specificity">
    <text evidence="10 11">Expressed in several neurons including AIY, CEPDL, RID, ALA, RMED, AIN, AVJ and CAN neurons.</text>
</comment>
<comment type="developmental stage">
    <text evidence="6">After cell cleavage of the SMDD/AIY mother (ABpl/rpapaaa) at the end of embryonic gastrulation, expressed in AIY interneurons, but not in the sister cells, SMDD motor neurons (PubMed:19386265). During embryonic elongation, expression increases in AIY (PubMed:19386265).</text>
</comment>
<comment type="disruption phenotype">
    <text evidence="7">RNAi-mediated knockdown causes severe defects in the ALA neuron in young adults, and when RNAi is begun embryonically, some individuals lack a detectable ALA neuron.</text>
</comment>
<comment type="similarity">
    <text evidence="12">Belongs to the paired homeobox family.</text>
</comment>
<protein>
    <recommendedName>
        <fullName>Homeobox protein ceh-10</fullName>
    </recommendedName>
</protein>